<geneLocation type="chloroplast"/>
<comment type="function">
    <text evidence="1">Found at the monomer-monomer interface of the photosystem II (PS II) dimer, plays a role in assembly and dimerization of PSII. PSII is a light-driven water plastoquinone oxidoreductase, using light energy to abstract electrons from H(2)O, generating a proton gradient subsequently used for ATP formation.</text>
</comment>
<comment type="subunit">
    <text evidence="1">PSII is composed of 1 copy each of membrane proteins PsbA, PsbB, PsbC, PsbD, PsbE, PsbF, PsbH, PsbI, PsbJ, PsbK, PsbL, PsbM, PsbT, PsbY, PsbZ, Psb30/Ycf12, at least 3 peripheral proteins of the oxygen-evolving complex and a large number of cofactors. It forms dimeric complexes.</text>
</comment>
<comment type="subcellular location">
    <subcellularLocation>
        <location evidence="1">Plastid</location>
        <location evidence="1">Chloroplast thylakoid membrane</location>
        <topology evidence="1">Single-pass membrane protein</topology>
    </subcellularLocation>
</comment>
<comment type="similarity">
    <text evidence="1">Belongs to the PsbT family.</text>
</comment>
<organism>
    <name type="scientific">Hydrastis canadensis</name>
    <name type="common">Goldenseal</name>
    <dbReference type="NCBI Taxonomy" id="13569"/>
    <lineage>
        <taxon>Eukaryota</taxon>
        <taxon>Viridiplantae</taxon>
        <taxon>Streptophyta</taxon>
        <taxon>Embryophyta</taxon>
        <taxon>Tracheophyta</taxon>
        <taxon>Spermatophyta</taxon>
        <taxon>Magnoliopsida</taxon>
        <taxon>Ranunculales</taxon>
        <taxon>Ranunculaceae</taxon>
        <taxon>Hydrastidoideae</taxon>
        <taxon>Hydrastis</taxon>
    </lineage>
</organism>
<keyword id="KW-0150">Chloroplast</keyword>
<keyword id="KW-0472">Membrane</keyword>
<keyword id="KW-0602">Photosynthesis</keyword>
<keyword id="KW-0604">Photosystem II</keyword>
<keyword id="KW-0934">Plastid</keyword>
<keyword id="KW-0793">Thylakoid</keyword>
<keyword id="KW-0812">Transmembrane</keyword>
<keyword id="KW-1133">Transmembrane helix</keyword>
<reference key="1">
    <citation type="journal article" date="2003" name="Mol. Phylogenet. Evol.">
        <title>Inference of higher-order relationships in the cycads from a large chloroplast data set.</title>
        <authorList>
            <person name="Rai H.S."/>
            <person name="O'Brien H.E."/>
            <person name="Reeves P.A."/>
            <person name="Olmstead R.G."/>
            <person name="Graham S.W."/>
        </authorList>
    </citation>
    <scope>NUCLEOTIDE SEQUENCE [GENOMIC DNA]</scope>
</reference>
<accession>Q7HIW5</accession>
<name>PSBT_HYDCA</name>
<sequence>MEALVYTFLLVSTLGIIFFAIFFREPPKVPTKKVK</sequence>
<proteinExistence type="inferred from homology"/>
<gene>
    <name evidence="1" type="primary">psbT</name>
</gene>
<evidence type="ECO:0000255" key="1">
    <source>
        <dbReference type="HAMAP-Rule" id="MF_00808"/>
    </source>
</evidence>
<dbReference type="EMBL" id="AY007464">
    <property type="protein sequence ID" value="AAG12368.1"/>
    <property type="molecule type" value="Genomic_DNA"/>
</dbReference>
<dbReference type="RefSeq" id="YP_009366867.1">
    <property type="nucleotide sequence ID" value="NC_034702.1"/>
</dbReference>
<dbReference type="SMR" id="Q7HIW5"/>
<dbReference type="GeneID" id="32883690"/>
<dbReference type="GO" id="GO:0009535">
    <property type="term" value="C:chloroplast thylakoid membrane"/>
    <property type="evidence" value="ECO:0007669"/>
    <property type="project" value="UniProtKB-SubCell"/>
</dbReference>
<dbReference type="GO" id="GO:0009539">
    <property type="term" value="C:photosystem II reaction center"/>
    <property type="evidence" value="ECO:0007669"/>
    <property type="project" value="InterPro"/>
</dbReference>
<dbReference type="GO" id="GO:0015979">
    <property type="term" value="P:photosynthesis"/>
    <property type="evidence" value="ECO:0007669"/>
    <property type="project" value="UniProtKB-UniRule"/>
</dbReference>
<dbReference type="HAMAP" id="MF_00808">
    <property type="entry name" value="PSII_PsbT"/>
    <property type="match status" value="1"/>
</dbReference>
<dbReference type="InterPro" id="IPR001743">
    <property type="entry name" value="PSII_PsbT"/>
</dbReference>
<dbReference type="InterPro" id="IPR037268">
    <property type="entry name" value="PSII_PsbT_sf"/>
</dbReference>
<dbReference type="PANTHER" id="PTHR36411">
    <property type="match status" value="1"/>
</dbReference>
<dbReference type="PANTHER" id="PTHR36411:SF2">
    <property type="entry name" value="PHOTOSYSTEM II REACTION CENTER PROTEIN T"/>
    <property type="match status" value="1"/>
</dbReference>
<dbReference type="Pfam" id="PF01405">
    <property type="entry name" value="PsbT"/>
    <property type="match status" value="1"/>
</dbReference>
<dbReference type="SUPFAM" id="SSF161029">
    <property type="entry name" value="Photosystem II reaction center protein T, PsbT"/>
    <property type="match status" value="1"/>
</dbReference>
<feature type="chain" id="PRO_0000217939" description="Photosystem II reaction center protein T">
    <location>
        <begin position="1"/>
        <end position="35"/>
    </location>
</feature>
<feature type="transmembrane region" description="Helical" evidence="1">
    <location>
        <begin position="3"/>
        <end position="23"/>
    </location>
</feature>
<protein>
    <recommendedName>
        <fullName evidence="1">Photosystem II reaction center protein T</fullName>
        <shortName evidence="1">PSII-T</shortName>
    </recommendedName>
</protein>